<comment type="function">
    <text evidence="1">Functions in the biosynthesis of branched-chain amino acids. Catalyzes the dehydration of (2R,3R)-2,3-dihydroxy-3-methylpentanoate (2,3-dihydroxy-3-methylvalerate) into 2-oxo-3-methylpentanoate (2-oxo-3-methylvalerate) and of (2R)-2,3-dihydroxy-3-methylbutanoate (2,3-dihydroxyisovalerate) into 2-oxo-3-methylbutanoate (2-oxoisovalerate), the penultimate precursor to L-isoleucine and L-valine, respectively.</text>
</comment>
<comment type="catalytic activity">
    <reaction evidence="1">
        <text>(2R)-2,3-dihydroxy-3-methylbutanoate = 3-methyl-2-oxobutanoate + H2O</text>
        <dbReference type="Rhea" id="RHEA:24809"/>
        <dbReference type="ChEBI" id="CHEBI:11851"/>
        <dbReference type="ChEBI" id="CHEBI:15377"/>
        <dbReference type="ChEBI" id="CHEBI:49072"/>
        <dbReference type="EC" id="4.2.1.9"/>
    </reaction>
    <physiologicalReaction direction="left-to-right" evidence="1">
        <dbReference type="Rhea" id="RHEA:24810"/>
    </physiologicalReaction>
</comment>
<comment type="catalytic activity">
    <reaction evidence="1">
        <text>(2R,3R)-2,3-dihydroxy-3-methylpentanoate = (S)-3-methyl-2-oxopentanoate + H2O</text>
        <dbReference type="Rhea" id="RHEA:27694"/>
        <dbReference type="ChEBI" id="CHEBI:15377"/>
        <dbReference type="ChEBI" id="CHEBI:35146"/>
        <dbReference type="ChEBI" id="CHEBI:49258"/>
        <dbReference type="EC" id="4.2.1.9"/>
    </reaction>
    <physiologicalReaction direction="left-to-right" evidence="1">
        <dbReference type="Rhea" id="RHEA:27695"/>
    </physiologicalReaction>
</comment>
<comment type="cofactor">
    <cofactor evidence="1">
        <name>[2Fe-2S] cluster</name>
        <dbReference type="ChEBI" id="CHEBI:190135"/>
    </cofactor>
    <text evidence="1">Binds 1 [2Fe-2S] cluster per subunit. This cluster acts as a Lewis acid cofactor.</text>
</comment>
<comment type="cofactor">
    <cofactor evidence="1">
        <name>Mg(2+)</name>
        <dbReference type="ChEBI" id="CHEBI:18420"/>
    </cofactor>
</comment>
<comment type="pathway">
    <text evidence="1">Amino-acid biosynthesis; L-isoleucine biosynthesis; L-isoleucine from 2-oxobutanoate: step 3/4.</text>
</comment>
<comment type="pathway">
    <text evidence="1">Amino-acid biosynthesis; L-valine biosynthesis; L-valine from pyruvate: step 3/4.</text>
</comment>
<comment type="subunit">
    <text evidence="1">Homodimer.</text>
</comment>
<comment type="similarity">
    <text evidence="1">Belongs to the IlvD/Edd family.</text>
</comment>
<proteinExistence type="inferred from homology"/>
<sequence>MRSDMIKKGDHQAPARSLLHATGALKSPTDMNKPFVAICNSYIDIVPGHVHLRELADIAKEAIREAGAIPFEFNTIGVDDGIAMGHIGMRYSLPSREIIADAAETVINAHWFDGVFYIPNCDKITPGMILAAMRTNVPAIFCSGGPMKAGLSAHGKALTLSSMFEAVGAFKEGSISKEEFLDMEQNACPTCGSCAGMFTANSMNCLMEVLGLALPYNGTALAVSDQRREMIRQAAFKLVENIKNDLKPRDIVTREAIDDAFALDMAMGGSTNTVLHTLAIANEAGIDYDLERINAIAKRTPYLSKIAPSSSYSMHDVHEAGGVPAIINELMKKDGTLHPDRITVTGKTLRENNEGKEIKNFDVIHPLDAPYDAQGGLSILFGNIAPKGAVIKVGGVDPSIKTFTGKAICFNSHDEAVEAIDNRTVRAGHVVVIRYEGPKGGPGMPEMLAPTSSIVGRGLGKDVALITDGRFSGATRGIAVGHISPEAASGGPIALIEDGDEITIDLTNRTLNVNQPEDVLARRRESLTPFKAKVKTGYLARYTALVTSANTGGVMQVPENLI</sequence>
<accession>Q2FWK7</accession>
<name>ILVD_STAA8</name>
<gene>
    <name evidence="1" type="primary">ilvD</name>
    <name type="ordered locus">SAOUHSC_02281</name>
</gene>
<dbReference type="EC" id="4.2.1.9" evidence="1"/>
<dbReference type="EMBL" id="CP000253">
    <property type="protein sequence ID" value="ABD31319.1"/>
    <property type="molecule type" value="Genomic_DNA"/>
</dbReference>
<dbReference type="RefSeq" id="WP_001255780.1">
    <property type="nucleotide sequence ID" value="NZ_LS483365.1"/>
</dbReference>
<dbReference type="RefSeq" id="YP_500763.1">
    <property type="nucleotide sequence ID" value="NC_007795.1"/>
</dbReference>
<dbReference type="SMR" id="Q2FWK7"/>
<dbReference type="STRING" id="93061.SAOUHSC_02281"/>
<dbReference type="PaxDb" id="1280-SAXN108_2296"/>
<dbReference type="GeneID" id="3919156"/>
<dbReference type="KEGG" id="sao:SAOUHSC_02281"/>
<dbReference type="PATRIC" id="fig|93061.5.peg.2071"/>
<dbReference type="eggNOG" id="COG0129">
    <property type="taxonomic scope" value="Bacteria"/>
</dbReference>
<dbReference type="HOGENOM" id="CLU_014271_4_2_9"/>
<dbReference type="OrthoDB" id="9807077at2"/>
<dbReference type="UniPathway" id="UPA00047">
    <property type="reaction ID" value="UER00057"/>
</dbReference>
<dbReference type="UniPathway" id="UPA00049">
    <property type="reaction ID" value="UER00061"/>
</dbReference>
<dbReference type="PRO" id="PR:Q2FWK7"/>
<dbReference type="Proteomes" id="UP000008816">
    <property type="component" value="Chromosome"/>
</dbReference>
<dbReference type="GO" id="GO:0005829">
    <property type="term" value="C:cytosol"/>
    <property type="evidence" value="ECO:0000318"/>
    <property type="project" value="GO_Central"/>
</dbReference>
<dbReference type="GO" id="GO:0051537">
    <property type="term" value="F:2 iron, 2 sulfur cluster binding"/>
    <property type="evidence" value="ECO:0007669"/>
    <property type="project" value="UniProtKB-UniRule"/>
</dbReference>
<dbReference type="GO" id="GO:0004160">
    <property type="term" value="F:dihydroxy-acid dehydratase activity"/>
    <property type="evidence" value="ECO:0007669"/>
    <property type="project" value="UniProtKB-UniRule"/>
</dbReference>
<dbReference type="GO" id="GO:0016836">
    <property type="term" value="F:hydro-lyase activity"/>
    <property type="evidence" value="ECO:0000318"/>
    <property type="project" value="GO_Central"/>
</dbReference>
<dbReference type="GO" id="GO:0000287">
    <property type="term" value="F:magnesium ion binding"/>
    <property type="evidence" value="ECO:0007669"/>
    <property type="project" value="UniProtKB-UniRule"/>
</dbReference>
<dbReference type="GO" id="GO:0009097">
    <property type="term" value="P:isoleucine biosynthetic process"/>
    <property type="evidence" value="ECO:0007669"/>
    <property type="project" value="UniProtKB-UniRule"/>
</dbReference>
<dbReference type="GO" id="GO:0009099">
    <property type="term" value="P:L-valine biosynthetic process"/>
    <property type="evidence" value="ECO:0007669"/>
    <property type="project" value="UniProtKB-UniRule"/>
</dbReference>
<dbReference type="FunFam" id="3.50.30.80:FF:000001">
    <property type="entry name" value="Dihydroxy-acid dehydratase"/>
    <property type="match status" value="1"/>
</dbReference>
<dbReference type="Gene3D" id="3.50.30.80">
    <property type="entry name" value="IlvD/EDD C-terminal domain-like"/>
    <property type="match status" value="1"/>
</dbReference>
<dbReference type="HAMAP" id="MF_00012">
    <property type="entry name" value="IlvD"/>
    <property type="match status" value="1"/>
</dbReference>
<dbReference type="InterPro" id="IPR042096">
    <property type="entry name" value="Dihydro-acid_dehy_C"/>
</dbReference>
<dbReference type="InterPro" id="IPR004404">
    <property type="entry name" value="DihydroxyA_deHydtase"/>
</dbReference>
<dbReference type="InterPro" id="IPR020558">
    <property type="entry name" value="DiOHA_6PGluconate_deHydtase_CS"/>
</dbReference>
<dbReference type="InterPro" id="IPR056740">
    <property type="entry name" value="ILV_EDD_C"/>
</dbReference>
<dbReference type="InterPro" id="IPR000581">
    <property type="entry name" value="ILV_EDD_N"/>
</dbReference>
<dbReference type="InterPro" id="IPR037237">
    <property type="entry name" value="IlvD/EDD_N"/>
</dbReference>
<dbReference type="NCBIfam" id="TIGR00110">
    <property type="entry name" value="ilvD"/>
    <property type="match status" value="1"/>
</dbReference>
<dbReference type="NCBIfam" id="NF002068">
    <property type="entry name" value="PRK00911.1"/>
    <property type="match status" value="1"/>
</dbReference>
<dbReference type="PANTHER" id="PTHR43661">
    <property type="entry name" value="D-XYLONATE DEHYDRATASE"/>
    <property type="match status" value="1"/>
</dbReference>
<dbReference type="PANTHER" id="PTHR43661:SF3">
    <property type="entry name" value="D-XYLONATE DEHYDRATASE YAGF-RELATED"/>
    <property type="match status" value="1"/>
</dbReference>
<dbReference type="Pfam" id="PF24877">
    <property type="entry name" value="ILV_EDD_C"/>
    <property type="match status" value="1"/>
</dbReference>
<dbReference type="Pfam" id="PF00920">
    <property type="entry name" value="ILVD_EDD_N"/>
    <property type="match status" value="1"/>
</dbReference>
<dbReference type="SUPFAM" id="SSF143975">
    <property type="entry name" value="IlvD/EDD N-terminal domain-like"/>
    <property type="match status" value="1"/>
</dbReference>
<dbReference type="SUPFAM" id="SSF52016">
    <property type="entry name" value="LeuD/IlvD-like"/>
    <property type="match status" value="1"/>
</dbReference>
<dbReference type="PROSITE" id="PS00886">
    <property type="entry name" value="ILVD_EDD_1"/>
    <property type="match status" value="1"/>
</dbReference>
<dbReference type="PROSITE" id="PS00887">
    <property type="entry name" value="ILVD_EDD_2"/>
    <property type="match status" value="1"/>
</dbReference>
<feature type="chain" id="PRO_1000001067" description="Dihydroxy-acid dehydratase">
    <location>
        <begin position="1"/>
        <end position="562"/>
    </location>
</feature>
<feature type="active site" description="Proton acceptor" evidence="1">
    <location>
        <position position="472"/>
    </location>
</feature>
<feature type="binding site" evidence="1">
    <location>
        <position position="80"/>
    </location>
    <ligand>
        <name>Mg(2+)</name>
        <dbReference type="ChEBI" id="CHEBI:18420"/>
    </ligand>
</feature>
<feature type="binding site" evidence="1">
    <location>
        <position position="121"/>
    </location>
    <ligand>
        <name>[2Fe-2S] cluster</name>
        <dbReference type="ChEBI" id="CHEBI:190135"/>
    </ligand>
</feature>
<feature type="binding site" evidence="1">
    <location>
        <position position="122"/>
    </location>
    <ligand>
        <name>Mg(2+)</name>
        <dbReference type="ChEBI" id="CHEBI:18420"/>
    </ligand>
</feature>
<feature type="binding site" description="via carbamate group" evidence="1">
    <location>
        <position position="123"/>
    </location>
    <ligand>
        <name>Mg(2+)</name>
        <dbReference type="ChEBI" id="CHEBI:18420"/>
    </ligand>
</feature>
<feature type="binding site" evidence="1">
    <location>
        <position position="194"/>
    </location>
    <ligand>
        <name>[2Fe-2S] cluster</name>
        <dbReference type="ChEBI" id="CHEBI:190135"/>
    </ligand>
</feature>
<feature type="binding site" evidence="1">
    <location>
        <position position="446"/>
    </location>
    <ligand>
        <name>Mg(2+)</name>
        <dbReference type="ChEBI" id="CHEBI:18420"/>
    </ligand>
</feature>
<feature type="modified residue" description="N6-carboxylysine" evidence="1">
    <location>
        <position position="123"/>
    </location>
</feature>
<evidence type="ECO:0000255" key="1">
    <source>
        <dbReference type="HAMAP-Rule" id="MF_00012"/>
    </source>
</evidence>
<organism>
    <name type="scientific">Staphylococcus aureus (strain NCTC 8325 / PS 47)</name>
    <dbReference type="NCBI Taxonomy" id="93061"/>
    <lineage>
        <taxon>Bacteria</taxon>
        <taxon>Bacillati</taxon>
        <taxon>Bacillota</taxon>
        <taxon>Bacilli</taxon>
        <taxon>Bacillales</taxon>
        <taxon>Staphylococcaceae</taxon>
        <taxon>Staphylococcus</taxon>
    </lineage>
</organism>
<protein>
    <recommendedName>
        <fullName evidence="1">Dihydroxy-acid dehydratase</fullName>
        <shortName evidence="1">DAD</shortName>
        <ecNumber evidence="1">4.2.1.9</ecNumber>
    </recommendedName>
</protein>
<keyword id="KW-0001">2Fe-2S</keyword>
<keyword id="KW-0028">Amino-acid biosynthesis</keyword>
<keyword id="KW-0100">Branched-chain amino acid biosynthesis</keyword>
<keyword id="KW-0408">Iron</keyword>
<keyword id="KW-0411">Iron-sulfur</keyword>
<keyword id="KW-0456">Lyase</keyword>
<keyword id="KW-0460">Magnesium</keyword>
<keyword id="KW-0479">Metal-binding</keyword>
<keyword id="KW-1185">Reference proteome</keyword>
<reference key="1">
    <citation type="book" date="2006" name="Gram positive pathogens, 2nd edition">
        <title>The Staphylococcus aureus NCTC 8325 genome.</title>
        <editorList>
            <person name="Fischetti V."/>
            <person name="Novick R."/>
            <person name="Ferretti J."/>
            <person name="Portnoy D."/>
            <person name="Rood J."/>
        </editorList>
        <authorList>
            <person name="Gillaspy A.F."/>
            <person name="Worrell V."/>
            <person name="Orvis J."/>
            <person name="Roe B.A."/>
            <person name="Dyer D.W."/>
            <person name="Iandolo J.J."/>
        </authorList>
    </citation>
    <scope>NUCLEOTIDE SEQUENCE [LARGE SCALE GENOMIC DNA]</scope>
    <source>
        <strain>NCTC 8325 / PS 47</strain>
    </source>
</reference>